<proteinExistence type="evidence at transcript level"/>
<sequence length="3011" mass="338213">MADPGMMSLFGEDGNIFSEGLEGLGECGYPENTVNPMGQQMPMDQGFPSLQSSLHHPPANQNQAKLTHFDHYNQYEQQKMHLMDQPNRMISNAPGNGIASPHSQYHNPPVPQVPHGSGASGQMGVYPSMQNERHGQPFVDSGSMWGPRAVQVPDQIRAPYQQQQQQPQPTQPPQAPSGPPGQGHPQHMQQMGNYMARGDFSMQQHGQPQQQRMNQFSQGQEGLNQGNPFIATSGPGHLSHVPQQNPSMAPSLRHSVQQFHHHPPTALHGESVAHSPRFSPNPPQQGAVRPQTLNFSSRSQTVPSPTINNSGQYSRYPYSNLNQGLVNNTGMNQNLGLTNNTPMNQSVPRYPNAVGFPSNSGQGLMHQQPIHPSGSLNQMNTQTMHPSQPQGTYASPPPMSPMKAMSNPAGTPPPQVRPGSAGIPMEVGSYPNIPHPQPSHQPPGAMGIGQRNMGPRNMQQNRPFMGMSSTPREMGGHMRPNGCPGVGLADPQAIQERLISGQQLPSQQQSFQQQMPTCPPMQPHPGIHHQSSPPPHPHHQPWAQLHQSPQNTPQKVPVLQHSPSEPFLEKPVPDMTQVSGPNTQLVKSDDYLPSVEPQPQQKKKKKKNNHIAAEGPSKSFGKEDFPGGLDSQNLSRNSVDCSQEDKKKKKKPKAKKEPKDPKEPKEKKEPKTPKVPKTPKEPKEKKAKNTTPKPKTSKKTSNKKTDSESSAAKKKVNKGKEGSENSDLDKTPPPSPHPEDEDDPGVQKRRSSRQVKRKRYTEDLEFKISDEEADDADAAGRDSPSNTSQSEQQESADAEGPVVEKIMSSRSVKKKMENGEEVEIEEFYVKYKNFSYLHCQWASVEELDKDKRIQQKIKRFKAKQGQNKFLSEIDDELFNPDYVEIDRILDFSRSTDDNGEPVTHYLVKWCSLPYEDSTWELKQDIDQAKIEEFEKLMSREPEMERVERPPADDWKKSESSREYKNNNKLREYQLEGVNWLLFNWYNTRNCILADEMGLGKTIQSITFLYEIYLKGIHGPFLVIAPLSTIPNWEREFRTWTELNVVVYHGSQASRRTIQLYEMYFKDPQGRVIKGSYKFHAIITTFEMILTDCPELRNIPWRCVVIDEAHRLKNRNCKLLEGLKMMDLEHKVLLTGTPLQNTVEELFSLLHFLEPGRFPSETTFMQEFGDLKTEEQVQKLQAILKPMMLRRLKEDVEKNLAPKEETIIEVELTNIQKKYYRAILEKNFAFLSKGGGQANVPNLLNTMMELRKCCNHPYLINGAEEKILEEFKETHNADSPDFQLQAMIQAAGKLVLIDKLLPKLKAGGHRVLIFSQMVRCLDILEDYLIQRRYPYERIDGRVRGNLRQAAIDRFSRPDSDRFVFLLCTRAGGLGINLTAADTCIIFDSDWNPQNDLQAQARCHRIGQSKSVKIYRLITRNSYEREMFDKASLKLGLDKAVLQSMSGRENATNGVQQLSKKEIEDLLRKGAYGALMDEEDEGSKFCEEDIDQILLRRTHTITIESEGKGSTFAKASFVASGNRTDISLDDPNFWQKWAKKAELDIDALNGRNNLVIDTPRVRKQTRLYSAVKEDELMEFSDLESDSEEKPSTKPRRPQDKSQGYARSECFRVEKNLLVYGWGRWTDILSHGRYKRQLTEQDVETICRTILVYCLNHYKGDENIKSFIWDLITPTADGQTRALVNHSGLSAPVPRGRKGKKVKAQSSQPMLQDADWLTTCNPDVLFQEDSYRKHLKHHCNKVLLRVRMLYYLRQEVIGDQADRILEGADSSEVDVWIPEPFHAEVPADWWDKEADKSLLIGVFKHGYEKYNSMRADSTLCFLERVGMPDAKAIAAEQRGTDMLADGGDGGEFDREDEDPEYKPTRTPFKDEIDEFANSPPEDKEESIEIHPNKHSESNSELGQLYWPNTSTLTTRLRRLITAYQRSYKRQQMRQEALMKTDRRRRRPREEVRALEAEREAIITEKRQKWTRREEADFYRVVSTFGIIFDPIKHQFDWNQFRAFARLDKKSDESLEKYFNGFVNMCRRVCRMPVKPDDEPPDLSTMIEPITEERASRTLYRIELLRKIREQVLHHPQLGERLKLCQPSLDLPEWWECGKHDKDLLIGAAKHGVSRTDYHILNDPELSFLEAHKNFAQNRGTGNANTVSSLHPVGAGCSQTPPIVPSTPVQEEKSTEQTESKVEGSENPAAKEKSDIKEETDIADKDTKQDCDAEAETGSVKCELKDIEMSTDVDPKSISEKGSEEDEEEKLDDDDKSEESSQPEAGAVSQGKNFDEESNASMSTARDETRDGFYMEDGDPSVVQLLHERTFAFSFWPKDRVMINRLDNICEAVLKGKWPVNRRQMFDFQGLIPGYTPTAVDSPLQKRSFAELSMIGQASISGSEDITASPQLSKEDALNLSVPRQRRRRRRKIEIEAERAAKRRNLMEMVAQLRESQVVSENGQEKVVDLSKASREATSSTSNFSSVTSKFILPNVSTPVSDAFKTQMELLQAGLSRTPTRHLLNGSLIDGEPPMKRRRGRRKNVEGLDLLFMSNKRTSLTVEDAEVTKAFEEDMEALPARNIPSPGQLDPDTRIPVINLEDGTRLVGEDAPKNKDLVEWLKLHPTYTVDMPSYVPKSADVLFSSFQKPKQKRHRCRNPNKLDINTLTGEERVPVVNKRNGKKMGGAMAPPMKDLPRWLEENPEFAVAPDWTDIVKQSGFVPESMFDRLLTGPVVREEGASRRGRRPKSEIAKAAAAAAAVASTSGINPLLMNSLFAGMDLTSLQNLQNLQSLQLAGLMGFPPGLATAAAAGGDAKNPAAMLPLMLPGMAGLPNMFGLSGLLNNPITATTGNATTASGQGETEDGASKAEEKKNENEEENKDSEKSTDTVSATDSANGSVSAATAATTATATTTTTTNTGLPTNPLAFNPFLLSTMAPGLFYPSMFLPPGLGGLTLPGFPALAGLQNAVGSNEEKATDKTEGTAFKDEENLEGSDAEESLDKTADSSILEDEIAQGEELDSLDGGEEIENNENDE</sequence>
<keyword id="KW-0067">ATP-binding</keyword>
<keyword id="KW-0156">Chromatin regulator</keyword>
<keyword id="KW-0175">Coiled coil</keyword>
<keyword id="KW-0238">DNA-binding</keyword>
<keyword id="KW-0378">Hydrolase</keyword>
<keyword id="KW-0547">Nucleotide-binding</keyword>
<keyword id="KW-0539">Nucleus</keyword>
<keyword id="KW-0597">Phosphoprotein</keyword>
<keyword id="KW-1185">Reference proteome</keyword>
<keyword id="KW-0677">Repeat</keyword>
<keyword id="KW-0698">rRNA processing</keyword>
<keyword id="KW-0804">Transcription</keyword>
<keyword id="KW-0805">Transcription regulation</keyword>
<organism>
    <name type="scientific">Gallus gallus</name>
    <name type="common">Chicken</name>
    <dbReference type="NCBI Taxonomy" id="9031"/>
    <lineage>
        <taxon>Eukaryota</taxon>
        <taxon>Metazoa</taxon>
        <taxon>Chordata</taxon>
        <taxon>Craniata</taxon>
        <taxon>Vertebrata</taxon>
        <taxon>Euteleostomi</taxon>
        <taxon>Archelosauria</taxon>
        <taxon>Archosauria</taxon>
        <taxon>Dinosauria</taxon>
        <taxon>Saurischia</taxon>
        <taxon>Theropoda</taxon>
        <taxon>Coelurosauria</taxon>
        <taxon>Aves</taxon>
        <taxon>Neognathae</taxon>
        <taxon>Galloanserae</taxon>
        <taxon>Galliformes</taxon>
        <taxon>Phasianidae</taxon>
        <taxon>Phasianinae</taxon>
        <taxon>Gallus</taxon>
    </lineage>
</organism>
<protein>
    <recommendedName>
        <fullName>Chromodomain-helicase-DNA-binding protein 7</fullName>
        <shortName>CHD-7</shortName>
        <ecNumber evidence="2">3.6.4.-</ecNumber>
    </recommendedName>
    <alternativeName>
        <fullName>ATP-dependent helicase CHD7</fullName>
    </alternativeName>
</protein>
<dbReference type="EC" id="3.6.4.-" evidence="2"/>
<dbReference type="EMBL" id="DQ978381">
    <property type="protein sequence ID" value="ABI96999.1"/>
    <property type="molecule type" value="mRNA"/>
</dbReference>
<dbReference type="RefSeq" id="NP_001071054.1">
    <property type="nucleotide sequence ID" value="NM_001077586.4"/>
</dbReference>
<dbReference type="RefSeq" id="XP_046767573.1">
    <property type="nucleotide sequence ID" value="XM_046911617.1"/>
</dbReference>
<dbReference type="RefSeq" id="XP_046767574.1">
    <property type="nucleotide sequence ID" value="XM_046911618.1"/>
</dbReference>
<dbReference type="RefSeq" id="XP_046767575.1">
    <property type="nucleotide sequence ID" value="XM_046911619.1"/>
</dbReference>
<dbReference type="RefSeq" id="XP_046767576.1">
    <property type="nucleotide sequence ID" value="XM_046911620.1"/>
</dbReference>
<dbReference type="RefSeq" id="XP_046767577.1">
    <property type="nucleotide sequence ID" value="XM_046911621.1"/>
</dbReference>
<dbReference type="RefSeq" id="XP_046781543.1">
    <property type="nucleotide sequence ID" value="XM_046925587.1"/>
</dbReference>
<dbReference type="RefSeq" id="XP_046781550.1">
    <property type="nucleotide sequence ID" value="XM_046925594.1"/>
</dbReference>
<dbReference type="RefSeq" id="XP_046781560.1">
    <property type="nucleotide sequence ID" value="XM_046925604.1"/>
</dbReference>
<dbReference type="RefSeq" id="XP_046781566.1">
    <property type="nucleotide sequence ID" value="XM_046925610.1"/>
</dbReference>
<dbReference type="RefSeq" id="XP_046781572.1">
    <property type="nucleotide sequence ID" value="XM_046925616.1"/>
</dbReference>
<dbReference type="SMR" id="Q06A37"/>
<dbReference type="FunCoup" id="Q06A37">
    <property type="interactions" value="425"/>
</dbReference>
<dbReference type="STRING" id="9031.ENSGALP00000056921"/>
<dbReference type="GlyGen" id="Q06A37">
    <property type="glycosylation" value="1 site"/>
</dbReference>
<dbReference type="PaxDb" id="9031-ENSGALP00000024904"/>
<dbReference type="Ensembl" id="ENSGALT00010006099.1">
    <property type="protein sequence ID" value="ENSGALP00010003807.1"/>
    <property type="gene ID" value="ENSGALG00010002626.1"/>
</dbReference>
<dbReference type="GeneID" id="421140"/>
<dbReference type="KEGG" id="gga:421140"/>
<dbReference type="CTD" id="55636"/>
<dbReference type="VEuPathDB" id="HostDB:geneid_421140"/>
<dbReference type="eggNOG" id="KOG0384">
    <property type="taxonomic scope" value="Eukaryota"/>
</dbReference>
<dbReference type="GeneTree" id="ENSGT00940000153649"/>
<dbReference type="HOGENOM" id="CLU_000315_5_0_1"/>
<dbReference type="InParanoid" id="Q06A37"/>
<dbReference type="OMA" id="AFVAMCK"/>
<dbReference type="OrthoDB" id="5857104at2759"/>
<dbReference type="PhylomeDB" id="Q06A37"/>
<dbReference type="PRO" id="PR:Q06A37"/>
<dbReference type="Proteomes" id="UP000000539">
    <property type="component" value="Chromosome 2"/>
</dbReference>
<dbReference type="GO" id="GO:0000785">
    <property type="term" value="C:chromatin"/>
    <property type="evidence" value="ECO:0000318"/>
    <property type="project" value="GO_Central"/>
</dbReference>
<dbReference type="GO" id="GO:0005730">
    <property type="term" value="C:nucleolus"/>
    <property type="evidence" value="ECO:0007669"/>
    <property type="project" value="Ensembl"/>
</dbReference>
<dbReference type="GO" id="GO:0005654">
    <property type="term" value="C:nucleoplasm"/>
    <property type="evidence" value="ECO:0007669"/>
    <property type="project" value="Ensembl"/>
</dbReference>
<dbReference type="GO" id="GO:0005634">
    <property type="term" value="C:nucleus"/>
    <property type="evidence" value="ECO:0000318"/>
    <property type="project" value="GO_Central"/>
</dbReference>
<dbReference type="GO" id="GO:0005524">
    <property type="term" value="F:ATP binding"/>
    <property type="evidence" value="ECO:0007669"/>
    <property type="project" value="UniProtKB-KW"/>
</dbReference>
<dbReference type="GO" id="GO:0016887">
    <property type="term" value="F:ATP hydrolysis activity"/>
    <property type="evidence" value="ECO:0000318"/>
    <property type="project" value="GO_Central"/>
</dbReference>
<dbReference type="GO" id="GO:0140658">
    <property type="term" value="F:ATP-dependent chromatin remodeler activity"/>
    <property type="evidence" value="ECO:0000318"/>
    <property type="project" value="GO_Central"/>
</dbReference>
<dbReference type="GO" id="GO:0003682">
    <property type="term" value="F:chromatin binding"/>
    <property type="evidence" value="ECO:0000318"/>
    <property type="project" value="GO_Central"/>
</dbReference>
<dbReference type="GO" id="GO:0003677">
    <property type="term" value="F:DNA binding"/>
    <property type="evidence" value="ECO:0000318"/>
    <property type="project" value="GO_Central"/>
</dbReference>
<dbReference type="GO" id="GO:0004386">
    <property type="term" value="F:helicase activity"/>
    <property type="evidence" value="ECO:0007669"/>
    <property type="project" value="UniProtKB-KW"/>
</dbReference>
<dbReference type="GO" id="GO:0042393">
    <property type="term" value="F:histone binding"/>
    <property type="evidence" value="ECO:0000318"/>
    <property type="project" value="GO_Central"/>
</dbReference>
<dbReference type="GO" id="GO:1990841">
    <property type="term" value="F:promoter-specific chromatin binding"/>
    <property type="evidence" value="ECO:0007669"/>
    <property type="project" value="Ensembl"/>
</dbReference>
<dbReference type="GO" id="GO:0000978">
    <property type="term" value="F:RNA polymerase II cis-regulatory region sequence-specific DNA binding"/>
    <property type="evidence" value="ECO:0007669"/>
    <property type="project" value="Ensembl"/>
</dbReference>
<dbReference type="GO" id="GO:0007512">
    <property type="term" value="P:adult heart development"/>
    <property type="evidence" value="ECO:0007669"/>
    <property type="project" value="Ensembl"/>
</dbReference>
<dbReference type="GO" id="GO:0007628">
    <property type="term" value="P:adult walking behavior"/>
    <property type="evidence" value="ECO:0007669"/>
    <property type="project" value="Ensembl"/>
</dbReference>
<dbReference type="GO" id="GO:0035909">
    <property type="term" value="P:aorta morphogenesis"/>
    <property type="evidence" value="ECO:0007669"/>
    <property type="project" value="Ensembl"/>
</dbReference>
<dbReference type="GO" id="GO:0036302">
    <property type="term" value="P:atrioventricular canal development"/>
    <property type="evidence" value="ECO:0007669"/>
    <property type="project" value="Ensembl"/>
</dbReference>
<dbReference type="GO" id="GO:0008015">
    <property type="term" value="P:blood circulation"/>
    <property type="evidence" value="ECO:0007669"/>
    <property type="project" value="Ensembl"/>
</dbReference>
<dbReference type="GO" id="GO:0001974">
    <property type="term" value="P:blood vessel remodeling"/>
    <property type="evidence" value="ECO:0007669"/>
    <property type="project" value="Ensembl"/>
</dbReference>
<dbReference type="GO" id="GO:0060411">
    <property type="term" value="P:cardiac septum morphogenesis"/>
    <property type="evidence" value="ECO:0007669"/>
    <property type="project" value="Ensembl"/>
</dbReference>
<dbReference type="GO" id="GO:0007417">
    <property type="term" value="P:central nervous system development"/>
    <property type="evidence" value="ECO:0000318"/>
    <property type="project" value="GO_Central"/>
</dbReference>
<dbReference type="GO" id="GO:0043009">
    <property type="term" value="P:chordate embryonic development"/>
    <property type="evidence" value="ECO:0000318"/>
    <property type="project" value="GO_Central"/>
</dbReference>
<dbReference type="GO" id="GO:0006338">
    <property type="term" value="P:chromatin remodeling"/>
    <property type="evidence" value="ECO:0000318"/>
    <property type="project" value="GO_Central"/>
</dbReference>
<dbReference type="GO" id="GO:0050890">
    <property type="term" value="P:cognition"/>
    <property type="evidence" value="ECO:0007669"/>
    <property type="project" value="Ensembl"/>
</dbReference>
<dbReference type="GO" id="GO:0021545">
    <property type="term" value="P:cranial nerve development"/>
    <property type="evidence" value="ECO:0000318"/>
    <property type="project" value="GO_Central"/>
</dbReference>
<dbReference type="GO" id="GO:0035116">
    <property type="term" value="P:embryonic hindlimb morphogenesis"/>
    <property type="evidence" value="ECO:0007669"/>
    <property type="project" value="Ensembl"/>
</dbReference>
<dbReference type="GO" id="GO:0060429">
    <property type="term" value="P:epithelium development"/>
    <property type="evidence" value="ECO:0007669"/>
    <property type="project" value="Ensembl"/>
</dbReference>
<dbReference type="GO" id="GO:0060324">
    <property type="term" value="P:face development"/>
    <property type="evidence" value="ECO:0007669"/>
    <property type="project" value="Ensembl"/>
</dbReference>
<dbReference type="GO" id="GO:0030540">
    <property type="term" value="P:female genitalia development"/>
    <property type="evidence" value="ECO:0007669"/>
    <property type="project" value="Ensembl"/>
</dbReference>
<dbReference type="GO" id="GO:0003007">
    <property type="term" value="P:heart morphogenesis"/>
    <property type="evidence" value="ECO:0000318"/>
    <property type="project" value="GO_Central"/>
</dbReference>
<dbReference type="GO" id="GO:0042472">
    <property type="term" value="P:inner ear morphogenesis"/>
    <property type="evidence" value="ECO:0000318"/>
    <property type="project" value="GO_Central"/>
</dbReference>
<dbReference type="GO" id="GO:0060384">
    <property type="term" value="P:innervation"/>
    <property type="evidence" value="ECO:0007669"/>
    <property type="project" value="Ensembl"/>
</dbReference>
<dbReference type="GO" id="GO:0043584">
    <property type="term" value="P:nose development"/>
    <property type="evidence" value="ECO:0007669"/>
    <property type="project" value="Ensembl"/>
</dbReference>
<dbReference type="GO" id="GO:0042048">
    <property type="term" value="P:olfactory behavior"/>
    <property type="evidence" value="ECO:0007669"/>
    <property type="project" value="Ensembl"/>
</dbReference>
<dbReference type="GO" id="GO:0021772">
    <property type="term" value="P:olfactory bulb development"/>
    <property type="evidence" value="ECO:0007669"/>
    <property type="project" value="Ensembl"/>
</dbReference>
<dbReference type="GO" id="GO:0021553">
    <property type="term" value="P:olfactory nerve development"/>
    <property type="evidence" value="ECO:0007669"/>
    <property type="project" value="Ensembl"/>
</dbReference>
<dbReference type="GO" id="GO:0040018">
    <property type="term" value="P:positive regulation of multicellular organism growth"/>
    <property type="evidence" value="ECO:0007669"/>
    <property type="project" value="Ensembl"/>
</dbReference>
<dbReference type="GO" id="GO:0045944">
    <property type="term" value="P:positive regulation of transcription by RNA polymerase II"/>
    <property type="evidence" value="ECO:0007669"/>
    <property type="project" value="Ensembl"/>
</dbReference>
<dbReference type="GO" id="GO:0010468">
    <property type="term" value="P:regulation of gene expression"/>
    <property type="evidence" value="ECO:0000318"/>
    <property type="project" value="GO_Central"/>
</dbReference>
<dbReference type="GO" id="GO:0060123">
    <property type="term" value="P:regulation of growth hormone secretion"/>
    <property type="evidence" value="ECO:0007669"/>
    <property type="project" value="Ensembl"/>
</dbReference>
<dbReference type="GO" id="GO:0050767">
    <property type="term" value="P:regulation of neurogenesis"/>
    <property type="evidence" value="ECO:0007669"/>
    <property type="project" value="Ensembl"/>
</dbReference>
<dbReference type="GO" id="GO:0010880">
    <property type="term" value="P:regulation of release of sequestered calcium ion into cytosol by sarcoplasmic reticulum"/>
    <property type="evidence" value="ECO:0007669"/>
    <property type="project" value="Ensembl"/>
</dbReference>
<dbReference type="GO" id="GO:0009617">
    <property type="term" value="P:response to bacterium"/>
    <property type="evidence" value="ECO:0007669"/>
    <property type="project" value="Ensembl"/>
</dbReference>
<dbReference type="GO" id="GO:0060041">
    <property type="term" value="P:retina development in camera-type eye"/>
    <property type="evidence" value="ECO:0007669"/>
    <property type="project" value="Ensembl"/>
</dbReference>
<dbReference type="GO" id="GO:0003226">
    <property type="term" value="P:right ventricular compact myocardium morphogenesis"/>
    <property type="evidence" value="ECO:0007669"/>
    <property type="project" value="Ensembl"/>
</dbReference>
<dbReference type="GO" id="GO:0006364">
    <property type="term" value="P:rRNA processing"/>
    <property type="evidence" value="ECO:0007669"/>
    <property type="project" value="UniProtKB-KW"/>
</dbReference>
<dbReference type="GO" id="GO:0062009">
    <property type="term" value="P:secondary palate development"/>
    <property type="evidence" value="ECO:0007669"/>
    <property type="project" value="Ensembl"/>
</dbReference>
<dbReference type="GO" id="GO:0048752">
    <property type="term" value="P:semicircular canal morphogenesis"/>
    <property type="evidence" value="ECO:0007669"/>
    <property type="project" value="Ensembl"/>
</dbReference>
<dbReference type="GO" id="GO:0007605">
    <property type="term" value="P:sensory perception of sound"/>
    <property type="evidence" value="ECO:0007669"/>
    <property type="project" value="Ensembl"/>
</dbReference>
<dbReference type="GO" id="GO:0001501">
    <property type="term" value="P:skeletal system development"/>
    <property type="evidence" value="ECO:0007669"/>
    <property type="project" value="Ensembl"/>
</dbReference>
<dbReference type="GO" id="GO:0030217">
    <property type="term" value="P:T cell differentiation"/>
    <property type="evidence" value="ECO:0007669"/>
    <property type="project" value="Ensembl"/>
</dbReference>
<dbReference type="GO" id="GO:0006366">
    <property type="term" value="P:transcription by RNA polymerase II"/>
    <property type="evidence" value="ECO:0007669"/>
    <property type="project" value="Ensembl"/>
</dbReference>
<dbReference type="GO" id="GO:0003222">
    <property type="term" value="P:ventricular trabecula myocardium morphogenesis"/>
    <property type="evidence" value="ECO:0007669"/>
    <property type="project" value="Ensembl"/>
</dbReference>
<dbReference type="CDD" id="cd18668">
    <property type="entry name" value="CD1_tandem_CHD5-9_like"/>
    <property type="match status" value="1"/>
</dbReference>
<dbReference type="CDD" id="cd18663">
    <property type="entry name" value="CD2_tandem_CHD5-9_like"/>
    <property type="match status" value="1"/>
</dbReference>
<dbReference type="CDD" id="cd18059">
    <property type="entry name" value="DEXHc_CHD7"/>
    <property type="match status" value="1"/>
</dbReference>
<dbReference type="CDD" id="cd18793">
    <property type="entry name" value="SF2_C_SNF"/>
    <property type="match status" value="1"/>
</dbReference>
<dbReference type="FunFam" id="1.10.10.60:FF:000184">
    <property type="entry name" value="Chromodomain helicase DNA binding protein 6"/>
    <property type="match status" value="1"/>
</dbReference>
<dbReference type="FunFam" id="2.40.50.40:FF:000001">
    <property type="entry name" value="chromodomain-helicase-DNA-binding protein 8 isoform X4"/>
    <property type="match status" value="1"/>
</dbReference>
<dbReference type="FunFam" id="3.40.50.10810:FF:000003">
    <property type="entry name" value="chromodomain-helicase-DNA-binding protein 8 isoform X4"/>
    <property type="match status" value="1"/>
</dbReference>
<dbReference type="FunFam" id="3.40.5.120:FF:000002">
    <property type="entry name" value="chromodomain-helicase-DNA-binding protein 9 isoform X1"/>
    <property type="match status" value="1"/>
</dbReference>
<dbReference type="FunFam" id="3.40.5.120:FF:000003">
    <property type="entry name" value="chromodomain-helicase-DNA-binding protein 9 isoform X1"/>
    <property type="match status" value="1"/>
</dbReference>
<dbReference type="FunFam" id="3.40.50.300:FF:000015">
    <property type="entry name" value="chromodomain-helicase-DNA-binding protein 9 isoform X1"/>
    <property type="match status" value="1"/>
</dbReference>
<dbReference type="Gene3D" id="2.40.50.40">
    <property type="match status" value="2"/>
</dbReference>
<dbReference type="Gene3D" id="3.40.5.120">
    <property type="match status" value="2"/>
</dbReference>
<dbReference type="Gene3D" id="1.10.10.60">
    <property type="entry name" value="Homeodomain-like"/>
    <property type="match status" value="2"/>
</dbReference>
<dbReference type="Gene3D" id="3.40.50.300">
    <property type="entry name" value="P-loop containing nucleotide triphosphate hydrolases"/>
    <property type="match status" value="1"/>
</dbReference>
<dbReference type="Gene3D" id="3.40.50.10810">
    <property type="entry name" value="Tandem AAA-ATPase domain"/>
    <property type="match status" value="1"/>
</dbReference>
<dbReference type="InterPro" id="IPR006576">
    <property type="entry name" value="BRK_domain"/>
</dbReference>
<dbReference type="InterPro" id="IPR037259">
    <property type="entry name" value="BRK_sf"/>
</dbReference>
<dbReference type="InterPro" id="IPR051493">
    <property type="entry name" value="CHD"/>
</dbReference>
<dbReference type="InterPro" id="IPR016197">
    <property type="entry name" value="Chromo-like_dom_sf"/>
</dbReference>
<dbReference type="InterPro" id="IPR000953">
    <property type="entry name" value="Chromo/chromo_shadow_dom"/>
</dbReference>
<dbReference type="InterPro" id="IPR023780">
    <property type="entry name" value="Chromo_domain"/>
</dbReference>
<dbReference type="InterPro" id="IPR014001">
    <property type="entry name" value="Helicase_ATP-bd"/>
</dbReference>
<dbReference type="InterPro" id="IPR001650">
    <property type="entry name" value="Helicase_C-like"/>
</dbReference>
<dbReference type="InterPro" id="IPR056342">
    <property type="entry name" value="HTH_CHD6-9"/>
</dbReference>
<dbReference type="InterPro" id="IPR027417">
    <property type="entry name" value="P-loop_NTPase"/>
</dbReference>
<dbReference type="InterPro" id="IPR038718">
    <property type="entry name" value="SNF2-like_sf"/>
</dbReference>
<dbReference type="InterPro" id="IPR049730">
    <property type="entry name" value="SNF2/RAD54-like_C"/>
</dbReference>
<dbReference type="InterPro" id="IPR000330">
    <property type="entry name" value="SNF2_N"/>
</dbReference>
<dbReference type="PANTHER" id="PTHR46850">
    <property type="entry name" value="CHROMODOMAIN-HELICASE-DNA-BINDING PROTEIN 9"/>
    <property type="match status" value="1"/>
</dbReference>
<dbReference type="PANTHER" id="PTHR46850:SF1">
    <property type="entry name" value="CHROMODOMAIN-HELICASE-DNA-BINDING PROTEIN 9"/>
    <property type="match status" value="1"/>
</dbReference>
<dbReference type="Pfam" id="PF07533">
    <property type="entry name" value="BRK"/>
    <property type="match status" value="2"/>
</dbReference>
<dbReference type="Pfam" id="PF00385">
    <property type="entry name" value="Chromo"/>
    <property type="match status" value="2"/>
</dbReference>
<dbReference type="Pfam" id="PF00271">
    <property type="entry name" value="Helicase_C"/>
    <property type="match status" value="1"/>
</dbReference>
<dbReference type="Pfam" id="PF23078">
    <property type="entry name" value="HTH_CHD6-9"/>
    <property type="match status" value="1"/>
</dbReference>
<dbReference type="Pfam" id="PF00176">
    <property type="entry name" value="SNF2-rel_dom"/>
    <property type="match status" value="1"/>
</dbReference>
<dbReference type="SMART" id="SM00592">
    <property type="entry name" value="BRK"/>
    <property type="match status" value="2"/>
</dbReference>
<dbReference type="SMART" id="SM00298">
    <property type="entry name" value="CHROMO"/>
    <property type="match status" value="2"/>
</dbReference>
<dbReference type="SMART" id="SM00487">
    <property type="entry name" value="DEXDc"/>
    <property type="match status" value="1"/>
</dbReference>
<dbReference type="SMART" id="SM00490">
    <property type="entry name" value="HELICc"/>
    <property type="match status" value="1"/>
</dbReference>
<dbReference type="SUPFAM" id="SSF160481">
    <property type="entry name" value="BRK domain-like"/>
    <property type="match status" value="2"/>
</dbReference>
<dbReference type="SUPFAM" id="SSF54160">
    <property type="entry name" value="Chromo domain-like"/>
    <property type="match status" value="2"/>
</dbReference>
<dbReference type="SUPFAM" id="SSF52540">
    <property type="entry name" value="P-loop containing nucleoside triphosphate hydrolases"/>
    <property type="match status" value="2"/>
</dbReference>
<dbReference type="PROSITE" id="PS50013">
    <property type="entry name" value="CHROMO_2"/>
    <property type="match status" value="2"/>
</dbReference>
<dbReference type="PROSITE" id="PS51192">
    <property type="entry name" value="HELICASE_ATP_BIND_1"/>
    <property type="match status" value="1"/>
</dbReference>
<dbReference type="PROSITE" id="PS51194">
    <property type="entry name" value="HELICASE_CTER"/>
    <property type="match status" value="1"/>
</dbReference>
<evidence type="ECO:0000250" key="1"/>
<evidence type="ECO:0000250" key="2">
    <source>
        <dbReference type="UniProtKB" id="Q9P2D1"/>
    </source>
</evidence>
<evidence type="ECO:0000255" key="3"/>
<evidence type="ECO:0000255" key="4">
    <source>
        <dbReference type="PROSITE-ProRule" id="PRU00053"/>
    </source>
</evidence>
<evidence type="ECO:0000255" key="5">
    <source>
        <dbReference type="PROSITE-ProRule" id="PRU00541"/>
    </source>
</evidence>
<evidence type="ECO:0000255" key="6">
    <source>
        <dbReference type="PROSITE-ProRule" id="PRU00542"/>
    </source>
</evidence>
<evidence type="ECO:0000256" key="7">
    <source>
        <dbReference type="SAM" id="MobiDB-lite"/>
    </source>
</evidence>
<evidence type="ECO:0000269" key="8">
    <source>
    </source>
</evidence>
<evidence type="ECO:0000305" key="9"/>
<comment type="function">
    <text evidence="2">ATP-dependent chromatin-remodeling factor, slides nucleosomes along DNA; nucleosome sliding requires ATP.Probable transcription regulator. Maybe involved in the in 45S precursor rRNA production (By similarity).</text>
</comment>
<comment type="catalytic activity">
    <reaction evidence="2">
        <text>ATP + H2O = ADP + phosphate + H(+)</text>
        <dbReference type="Rhea" id="RHEA:13065"/>
        <dbReference type="ChEBI" id="CHEBI:15377"/>
        <dbReference type="ChEBI" id="CHEBI:15378"/>
        <dbReference type="ChEBI" id="CHEBI:30616"/>
        <dbReference type="ChEBI" id="CHEBI:43474"/>
        <dbReference type="ChEBI" id="CHEBI:456216"/>
    </reaction>
</comment>
<comment type="subcellular location">
    <subcellularLocation>
        <location evidence="2">Nucleus</location>
    </subcellularLocation>
</comment>
<comment type="tissue specificity">
    <text evidence="8">Expressed in the neural epithelium, otic placodes, optic placodes, branchial arches, and the olfactory placodes,.</text>
</comment>
<comment type="developmental stage">
    <text evidence="8">Expression is pan-neuronal at stages 8-20. Expressed throughout the rostral neural ectoderm and along the rostrocaudal axis but is absent from the more lateral, non-neuronal ectoderm. Adjacent to the neural tube, detected at the optic and otic placodes. At stage 20, expression is observed in the branchial arches and olfactory placodes in addition to brain and optic and otic placodes.</text>
</comment>
<comment type="similarity">
    <text evidence="9">Belongs to the SNF2/RAD54 helicase family.</text>
</comment>
<gene>
    <name type="primary">CHD7</name>
</gene>
<feature type="chain" id="PRO_0000289965" description="Chromodomain-helicase-DNA-binding protein 7">
    <location>
        <begin position="1"/>
        <end position="3011"/>
    </location>
</feature>
<feature type="domain" description="Chromo 1" evidence="4">
    <location>
        <begin position="801"/>
        <end position="868"/>
    </location>
</feature>
<feature type="domain" description="Chromo 2" evidence="4">
    <location>
        <begin position="883"/>
        <end position="948"/>
    </location>
</feature>
<feature type="domain" description="Helicase ATP-binding" evidence="5">
    <location>
        <begin position="981"/>
        <end position="1155"/>
    </location>
</feature>
<feature type="domain" description="Helicase C-terminal" evidence="6">
    <location>
        <begin position="1295"/>
        <end position="1465"/>
    </location>
</feature>
<feature type="region of interest" description="Disordered" evidence="7">
    <location>
        <begin position="90"/>
        <end position="146"/>
    </location>
</feature>
<feature type="region of interest" description="Disordered" evidence="7">
    <location>
        <begin position="159"/>
        <end position="189"/>
    </location>
</feature>
<feature type="region of interest" description="Disordered" evidence="7">
    <location>
        <begin position="202"/>
        <end position="422"/>
    </location>
</feature>
<feature type="region of interest" description="Disordered" evidence="7">
    <location>
        <begin position="502"/>
        <end position="806"/>
    </location>
</feature>
<feature type="region of interest" description="Disordered" evidence="7">
    <location>
        <begin position="941"/>
        <end position="960"/>
    </location>
</feature>
<feature type="region of interest" description="Disordered" evidence="7">
    <location>
        <begin position="1577"/>
        <end position="1602"/>
    </location>
</feature>
<feature type="region of interest" description="Disordered" evidence="7">
    <location>
        <begin position="1836"/>
        <end position="1869"/>
    </location>
</feature>
<feature type="region of interest" description="Disordered" evidence="7">
    <location>
        <begin position="2136"/>
        <end position="2291"/>
    </location>
</feature>
<feature type="region of interest" description="Disordered" evidence="7">
    <location>
        <begin position="2825"/>
        <end position="2900"/>
    </location>
</feature>
<feature type="region of interest" description="Disordered" evidence="7">
    <location>
        <begin position="2946"/>
        <end position="3011"/>
    </location>
</feature>
<feature type="coiled-coil region" evidence="3">
    <location>
        <begin position="2403"/>
        <end position="2433"/>
    </location>
</feature>
<feature type="short sequence motif" description="DEAH box">
    <location>
        <begin position="1106"/>
        <end position="1109"/>
    </location>
</feature>
<feature type="compositionally biased region" description="Low complexity" evidence="7">
    <location>
        <begin position="159"/>
        <end position="168"/>
    </location>
</feature>
<feature type="compositionally biased region" description="Pro residues" evidence="7">
    <location>
        <begin position="169"/>
        <end position="179"/>
    </location>
</feature>
<feature type="compositionally biased region" description="Low complexity" evidence="7">
    <location>
        <begin position="203"/>
        <end position="215"/>
    </location>
</feature>
<feature type="compositionally biased region" description="Polar residues" evidence="7">
    <location>
        <begin position="216"/>
        <end position="227"/>
    </location>
</feature>
<feature type="compositionally biased region" description="Polar residues" evidence="7">
    <location>
        <begin position="241"/>
        <end position="258"/>
    </location>
</feature>
<feature type="compositionally biased region" description="Polar residues" evidence="7">
    <location>
        <begin position="291"/>
        <end position="347"/>
    </location>
</feature>
<feature type="compositionally biased region" description="Polar residues" evidence="7">
    <location>
        <begin position="374"/>
        <end position="393"/>
    </location>
</feature>
<feature type="compositionally biased region" description="Low complexity" evidence="7">
    <location>
        <begin position="502"/>
        <end position="516"/>
    </location>
</feature>
<feature type="compositionally biased region" description="Polar residues" evidence="7">
    <location>
        <begin position="576"/>
        <end position="586"/>
    </location>
</feature>
<feature type="compositionally biased region" description="Polar residues" evidence="7">
    <location>
        <begin position="630"/>
        <end position="641"/>
    </location>
</feature>
<feature type="compositionally biased region" description="Basic and acidic residues" evidence="7">
    <location>
        <begin position="655"/>
        <end position="684"/>
    </location>
</feature>
<feature type="compositionally biased region" description="Basic and acidic residues" evidence="7">
    <location>
        <begin position="718"/>
        <end position="730"/>
    </location>
</feature>
<feature type="compositionally biased region" description="Basic residues" evidence="7">
    <location>
        <begin position="747"/>
        <end position="759"/>
    </location>
</feature>
<feature type="compositionally biased region" description="Basic and acidic residues" evidence="7">
    <location>
        <begin position="760"/>
        <end position="770"/>
    </location>
</feature>
<feature type="compositionally biased region" description="Polar residues" evidence="7">
    <location>
        <begin position="783"/>
        <end position="795"/>
    </location>
</feature>
<feature type="compositionally biased region" description="Basic and acidic residues" evidence="7">
    <location>
        <begin position="1585"/>
        <end position="1597"/>
    </location>
</feature>
<feature type="compositionally biased region" description="Acidic residues" evidence="7">
    <location>
        <begin position="1845"/>
        <end position="1856"/>
    </location>
</feature>
<feature type="compositionally biased region" description="Basic and acidic residues" evidence="7">
    <location>
        <begin position="1857"/>
        <end position="1867"/>
    </location>
</feature>
<feature type="compositionally biased region" description="Polar residues" evidence="7">
    <location>
        <begin position="2136"/>
        <end position="2145"/>
    </location>
</feature>
<feature type="compositionally biased region" description="Basic and acidic residues" evidence="7">
    <location>
        <begin position="2166"/>
        <end position="2207"/>
    </location>
</feature>
<feature type="compositionally biased region" description="Basic and acidic residues" evidence="7">
    <location>
        <begin position="2218"/>
        <end position="2238"/>
    </location>
</feature>
<feature type="compositionally biased region" description="Acidic residues" evidence="7">
    <location>
        <begin position="2239"/>
        <end position="2253"/>
    </location>
</feature>
<feature type="compositionally biased region" description="Basic and acidic residues" evidence="7">
    <location>
        <begin position="2841"/>
        <end position="2851"/>
    </location>
</feature>
<feature type="compositionally biased region" description="Polar residues" evidence="7">
    <location>
        <begin position="2864"/>
        <end position="2877"/>
    </location>
</feature>
<feature type="compositionally biased region" description="Low complexity" evidence="7">
    <location>
        <begin position="2878"/>
        <end position="2893"/>
    </location>
</feature>
<feature type="compositionally biased region" description="Basic and acidic residues" evidence="7">
    <location>
        <begin position="2948"/>
        <end position="2964"/>
    </location>
</feature>
<feature type="compositionally biased region" description="Acidic residues" evidence="7">
    <location>
        <begin position="2965"/>
        <end position="2974"/>
    </location>
</feature>
<feature type="compositionally biased region" description="Acidic residues" evidence="7">
    <location>
        <begin position="2984"/>
        <end position="3011"/>
    </location>
</feature>
<feature type="binding site" evidence="5">
    <location>
        <begin position="994"/>
        <end position="1001"/>
    </location>
    <ligand>
        <name>ATP</name>
        <dbReference type="ChEBI" id="CHEBI:30616"/>
    </ligand>
</feature>
<feature type="modified residue" description="Phosphoserine" evidence="1">
    <location>
        <position position="2561"/>
    </location>
</feature>
<name>CHD7_CHICK</name>
<reference key="1">
    <citation type="journal article" date="2007" name="Birth Defects Res. A Clin. Mol. Teratol.">
        <title>Embryonic expression profile of chicken CHD7, the ortholog of the causative gene for CHARGE syndrome.</title>
        <authorList>
            <person name="Aramaki M."/>
            <person name="Kimura T."/>
            <person name="Udaka T."/>
            <person name="Kosaki R."/>
            <person name="Mitsuhashi T."/>
            <person name="Okada Y."/>
            <person name="Takahashi T."/>
            <person name="Kosaki K."/>
        </authorList>
    </citation>
    <scope>NUCLEOTIDE SEQUENCE [MRNA]</scope>
    <scope>TISSUE SPECIFICITY</scope>
    <scope>DEVELOPMENTAL STAGE</scope>
</reference>
<accession>Q06A37</accession>